<sequence length="935" mass="96950">MNMKKKEKHAIRKKSIGVASVLVGTLIGFGLLSSKEADASENSVTQSDSASNESKSNDSSSVSAAPKTDDTNVSDTKTSSNTNNGETSVAQNPAQQETTQSSSTNATTEETPVTGEATTTTTNQANTPATTQSSNTNAEELVNQTSNETTSNDTNTVSSVNSPQNSTNAENVSTTQDTSTEATPSNNESAPQNTDASNKDVVSQAVNPSTPRMRAFSLAAVAADAPAAGTDITNQLTDVKVTIDSGTTVYPHQAGYVKLNYGFSVPNSAVKGDTFKITVPKELNLNGVTSTAKVPPIMAGDQVLANGVIDSDGNVIYTFTDYVDNKENVTANITMPAYIDPENVTKTGNVTLTTGIGTNTASKTVLIDYEKYGQFHNLSIKGTIDQIDKTNNTYRQTIYVNPSGDNVVLPALTGNLIPNTKSNALIDAKNTDIKVYRVDNANDLSESYYVNPSDFEDVTNQVRISFPNANQYKVEFPTDDDQITTPYIVVVNGHIDPASTGDLALRSTFYGYDSNFIWRSMSWDNEVAFNNGSGSGDGIDKPVVPEQPDEPGEIEPIPEDSDSDPGSDSGSDSNSDSGSDSGSDSTSDSGSDSASDSDSASDSDSASDSDSASDSDSASDSDSASDSDSASDSDSASDSDSASDSDSASDSDSASDSDSASDSDSASDSDSDSDSDSDSDSDSDSDSDSDSDSDSDSDSDSDSDSDSDSDSDSDSDSDSDSDSDSDSDSDSDSDSDSDSDSDSDSDSDSDSDSDSDSDSDSDSDSDSASDSDSDSDSESDSDSDSDSDSDSDSDSDSDSDSESDSDSDSDSDSESDSDSDSDSDSDSASDSDSGSDSDSSSDSDSDSTSDTGSDNDSDSDSNSDSESGSNNNVVPPNSPKNGTNASNKNEAKDSKEPLPDTGSEDEANTSLIWGLLASLGSLLLFRRKKENKDKK</sequence>
<reference key="1">
    <citation type="journal article" date="2001" name="Lancet">
        <title>Whole genome sequencing of meticillin-resistant Staphylococcus aureus.</title>
        <authorList>
            <person name="Kuroda M."/>
            <person name="Ohta T."/>
            <person name="Uchiyama I."/>
            <person name="Baba T."/>
            <person name="Yuzawa H."/>
            <person name="Kobayashi I."/>
            <person name="Cui L."/>
            <person name="Oguchi A."/>
            <person name="Aoki K."/>
            <person name="Nagai Y."/>
            <person name="Lian J.-Q."/>
            <person name="Ito T."/>
            <person name="Kanamori M."/>
            <person name="Matsumaru H."/>
            <person name="Maruyama A."/>
            <person name="Murakami H."/>
            <person name="Hosoyama A."/>
            <person name="Mizutani-Ui Y."/>
            <person name="Takahashi N.K."/>
            <person name="Sawano T."/>
            <person name="Inoue R."/>
            <person name="Kaito C."/>
            <person name="Sekimizu K."/>
            <person name="Hirakawa H."/>
            <person name="Kuhara S."/>
            <person name="Goto S."/>
            <person name="Yabuzaki J."/>
            <person name="Kanehisa M."/>
            <person name="Yamashita A."/>
            <person name="Oshima K."/>
            <person name="Furuya K."/>
            <person name="Yoshino C."/>
            <person name="Shiba T."/>
            <person name="Hattori M."/>
            <person name="Ogasawara N."/>
            <person name="Hayashi H."/>
            <person name="Hiramatsu K."/>
        </authorList>
    </citation>
    <scope>NUCLEOTIDE SEQUENCE [LARGE SCALE GENOMIC DNA]</scope>
    <source>
        <strain>Mu50 / ATCC 700699</strain>
    </source>
</reference>
<protein>
    <recommendedName>
        <fullName>Clumping factor A</fullName>
    </recommendedName>
    <alternativeName>
        <fullName>Fibrinogen receptor A</fullName>
    </alternativeName>
    <alternativeName>
        <fullName>Fibrinogen-binding protein A</fullName>
    </alternativeName>
</protein>
<comment type="function">
    <text evidence="1">Cell surface-associated protein implicated in virulence. Promotes bacterial attachment exclusively to the gamma-chain of human fibrinogen. Induces formation of bacterial clumps (By similarity).</text>
</comment>
<comment type="subcellular location">
    <subcellularLocation>
        <location evidence="4">Secreted</location>
        <location evidence="4">Cell wall</location>
        <topology evidence="4">Peptidoglycan-anchor</topology>
    </subcellularLocation>
    <text evidence="2">Anchored to the cell wall by sortase A (By similarity).</text>
</comment>
<comment type="similarity">
    <text evidence="6">Belongs to the serine-aspartate repeat-containing protein (SDr) family.</text>
</comment>
<organism>
    <name type="scientific">Staphylococcus aureus (strain Mu50 / ATCC 700699)</name>
    <dbReference type="NCBI Taxonomy" id="158878"/>
    <lineage>
        <taxon>Bacteria</taxon>
        <taxon>Bacillati</taxon>
        <taxon>Bacillota</taxon>
        <taxon>Bacilli</taxon>
        <taxon>Bacillales</taxon>
        <taxon>Staphylococcaceae</taxon>
        <taxon>Staphylococcus</taxon>
    </lineage>
</organism>
<name>CLFA_STAAM</name>
<evidence type="ECO:0000250" key="1"/>
<evidence type="ECO:0000250" key="2">
    <source>
        <dbReference type="UniProtKB" id="Q2G015"/>
    </source>
</evidence>
<evidence type="ECO:0000255" key="3"/>
<evidence type="ECO:0000255" key="4">
    <source>
        <dbReference type="PROSITE-ProRule" id="PRU00477"/>
    </source>
</evidence>
<evidence type="ECO:0000256" key="5">
    <source>
        <dbReference type="SAM" id="MobiDB-lite"/>
    </source>
</evidence>
<evidence type="ECO:0000305" key="6"/>
<feature type="signal peptide" evidence="3">
    <location>
        <begin position="1"/>
        <end position="39"/>
    </location>
</feature>
<feature type="chain" id="PRO_0000041994" description="Clumping factor A">
    <location>
        <begin position="40"/>
        <end position="901"/>
    </location>
</feature>
<feature type="propeptide" id="PRO_0000041995" description="Removed by sortase" evidence="4">
    <location>
        <begin position="902"/>
        <end position="935"/>
    </location>
</feature>
<feature type="region of interest" description="Disordered" evidence="5">
    <location>
        <begin position="34"/>
        <end position="205"/>
    </location>
</feature>
<feature type="region of interest" description="Ligand binding A region" evidence="1">
    <location>
        <begin position="40"/>
        <end position="542"/>
    </location>
</feature>
<feature type="region of interest" description="Disordered" evidence="5">
    <location>
        <begin position="529"/>
        <end position="906"/>
    </location>
</feature>
<feature type="short sequence motif" description="YSIRK-G/S signaling motif" evidence="2">
    <location>
        <begin position="9"/>
        <end position="20"/>
    </location>
</feature>
<feature type="short sequence motif" description="LPXTG sorting signal" evidence="4">
    <location>
        <begin position="898"/>
        <end position="902"/>
    </location>
</feature>
<feature type="compositionally biased region" description="Low complexity" evidence="5">
    <location>
        <begin position="47"/>
        <end position="65"/>
    </location>
</feature>
<feature type="compositionally biased region" description="Polar residues" evidence="5">
    <location>
        <begin position="71"/>
        <end position="105"/>
    </location>
</feature>
<feature type="compositionally biased region" description="Low complexity" evidence="5">
    <location>
        <begin position="106"/>
        <end position="132"/>
    </location>
</feature>
<feature type="compositionally biased region" description="Low complexity" evidence="5">
    <location>
        <begin position="143"/>
        <end position="162"/>
    </location>
</feature>
<feature type="compositionally biased region" description="Polar residues" evidence="5">
    <location>
        <begin position="163"/>
        <end position="205"/>
    </location>
</feature>
<feature type="compositionally biased region" description="Acidic residues" evidence="5">
    <location>
        <begin position="547"/>
        <end position="565"/>
    </location>
</feature>
<feature type="compositionally biased region" description="Low complexity" evidence="5">
    <location>
        <begin position="566"/>
        <end position="598"/>
    </location>
</feature>
<feature type="compositionally biased region" description="Acidic residues" evidence="5">
    <location>
        <begin position="599"/>
        <end position="863"/>
    </location>
</feature>
<feature type="compositionally biased region" description="Low complexity" evidence="5">
    <location>
        <begin position="864"/>
        <end position="882"/>
    </location>
</feature>
<feature type="compositionally biased region" description="Basic and acidic residues" evidence="5">
    <location>
        <begin position="889"/>
        <end position="898"/>
    </location>
</feature>
<feature type="modified residue" description="Pentaglycyl murein peptidoglycan amidated threonine" evidence="4">
    <location>
        <position position="901"/>
    </location>
</feature>
<keyword id="KW-0134">Cell wall</keyword>
<keyword id="KW-0572">Peptidoglycan-anchor</keyword>
<keyword id="KW-0964">Secreted</keyword>
<keyword id="KW-0732">Signal</keyword>
<keyword id="KW-0843">Virulence</keyword>
<accession>Q932C5</accession>
<gene>
    <name type="primary">clfA</name>
    <name type="synonym">fnb</name>
    <name type="ordered locus">SAV0811</name>
</gene>
<proteinExistence type="inferred from homology"/>
<dbReference type="EMBL" id="BA000017">
    <property type="protein sequence ID" value="BAB56973.1"/>
    <property type="molecule type" value="Genomic_DNA"/>
</dbReference>
<dbReference type="RefSeq" id="WP_001056193.1">
    <property type="nucleotide sequence ID" value="NC_002758.2"/>
</dbReference>
<dbReference type="SMR" id="Q932C5"/>
<dbReference type="ABCD" id="Q932C5">
    <property type="antibodies" value="14 sequenced antibodies"/>
</dbReference>
<dbReference type="KEGG" id="sav:SAV0811"/>
<dbReference type="HOGENOM" id="CLU_010159_0_0_9"/>
<dbReference type="PhylomeDB" id="Q932C5"/>
<dbReference type="PRO" id="PR:Q932C5"/>
<dbReference type="Proteomes" id="UP000002481">
    <property type="component" value="Chromosome"/>
</dbReference>
<dbReference type="GO" id="GO:0005576">
    <property type="term" value="C:extracellular region"/>
    <property type="evidence" value="ECO:0007669"/>
    <property type="project" value="UniProtKB-KW"/>
</dbReference>
<dbReference type="GO" id="GO:0007155">
    <property type="term" value="P:cell adhesion"/>
    <property type="evidence" value="ECO:0007669"/>
    <property type="project" value="InterPro"/>
</dbReference>
<dbReference type="Gene3D" id="2.60.40.1280">
    <property type="match status" value="1"/>
</dbReference>
<dbReference type="Gene3D" id="2.60.40.1290">
    <property type="match status" value="1"/>
</dbReference>
<dbReference type="InterPro" id="IPR011266">
    <property type="entry name" value="Adhesin_Fg-bd_dom_2"/>
</dbReference>
<dbReference type="InterPro" id="IPR008966">
    <property type="entry name" value="Adhesion_dom_sf"/>
</dbReference>
<dbReference type="InterPro" id="IPR011252">
    <property type="entry name" value="Fibrogen-bd_dom1"/>
</dbReference>
<dbReference type="InterPro" id="IPR019931">
    <property type="entry name" value="LPXTG_anchor"/>
</dbReference>
<dbReference type="InterPro" id="IPR050972">
    <property type="entry name" value="SDr-like"/>
</dbReference>
<dbReference type="InterPro" id="IPR041171">
    <property type="entry name" value="SDR_Ig"/>
</dbReference>
<dbReference type="InterPro" id="IPR005877">
    <property type="entry name" value="YSIRK_signal_dom"/>
</dbReference>
<dbReference type="NCBIfam" id="TIGR01167">
    <property type="entry name" value="LPXTG_anchor"/>
    <property type="match status" value="1"/>
</dbReference>
<dbReference type="NCBIfam" id="NF033609">
    <property type="entry name" value="MSCRAMM_ClfA"/>
    <property type="match status" value="1"/>
</dbReference>
<dbReference type="NCBIfam" id="TIGR01168">
    <property type="entry name" value="YSIRK_signal"/>
    <property type="match status" value="1"/>
</dbReference>
<dbReference type="PANTHER" id="PTHR34403">
    <property type="entry name" value="TOL-PAL SYSTEM PROTEIN TOLA"/>
    <property type="match status" value="1"/>
</dbReference>
<dbReference type="PANTHER" id="PTHR34403:SF8">
    <property type="entry name" value="TOL-PAL SYSTEM PROTEIN TOLA"/>
    <property type="match status" value="1"/>
</dbReference>
<dbReference type="Pfam" id="PF17961">
    <property type="entry name" value="Big_8"/>
    <property type="match status" value="1"/>
</dbReference>
<dbReference type="Pfam" id="PF00746">
    <property type="entry name" value="Gram_pos_anchor"/>
    <property type="match status" value="1"/>
</dbReference>
<dbReference type="Pfam" id="PF10425">
    <property type="entry name" value="SdrG_C_C"/>
    <property type="match status" value="1"/>
</dbReference>
<dbReference type="Pfam" id="PF04650">
    <property type="entry name" value="YSIRK_signal"/>
    <property type="match status" value="1"/>
</dbReference>
<dbReference type="SUPFAM" id="SSF49401">
    <property type="entry name" value="Bacterial adhesins"/>
    <property type="match status" value="2"/>
</dbReference>
<dbReference type="PROSITE" id="PS50847">
    <property type="entry name" value="GRAM_POS_ANCHORING"/>
    <property type="match status" value="1"/>
</dbReference>